<feature type="signal peptide" evidence="2">
    <location>
        <begin position="1"/>
        <end position="16"/>
    </location>
</feature>
<feature type="chain" id="PRO_5018815989" description="Acidic phospholipase A2 AplTX-I" evidence="5">
    <location>
        <begin position="17"/>
        <end position="138"/>
    </location>
</feature>
<feature type="active site" evidence="1">
    <location>
        <position position="63"/>
    </location>
</feature>
<feature type="active site" evidence="1">
    <location>
        <position position="105"/>
    </location>
</feature>
<feature type="binding site" evidence="1">
    <location>
        <position position="43"/>
    </location>
    <ligand>
        <name>Ca(2+)</name>
        <dbReference type="ChEBI" id="CHEBI:29108"/>
    </ligand>
</feature>
<feature type="binding site" evidence="1">
    <location>
        <position position="45"/>
    </location>
    <ligand>
        <name>Ca(2+)</name>
        <dbReference type="ChEBI" id="CHEBI:29108"/>
    </ligand>
</feature>
<feature type="binding site" evidence="1">
    <location>
        <position position="47"/>
    </location>
    <ligand>
        <name>Ca(2+)</name>
        <dbReference type="ChEBI" id="CHEBI:29108"/>
    </ligand>
</feature>
<feature type="binding site" evidence="1">
    <location>
        <position position="64"/>
    </location>
    <ligand>
        <name>Ca(2+)</name>
        <dbReference type="ChEBI" id="CHEBI:29108"/>
    </ligand>
</feature>
<feature type="disulfide bond" evidence="1">
    <location>
        <begin position="42"/>
        <end position="131"/>
    </location>
</feature>
<feature type="disulfide bond" evidence="1">
    <location>
        <begin position="44"/>
        <end position="60"/>
    </location>
</feature>
<feature type="disulfide bond" evidence="1">
    <location>
        <begin position="59"/>
        <end position="111"/>
    </location>
</feature>
<feature type="disulfide bond" evidence="1">
    <location>
        <begin position="65"/>
        <end position="138"/>
    </location>
</feature>
<feature type="disulfide bond" evidence="1">
    <location>
        <begin position="66"/>
        <end position="104"/>
    </location>
</feature>
<feature type="disulfide bond" evidence="1">
    <location>
        <begin position="73"/>
        <end position="97"/>
    </location>
</feature>
<feature type="disulfide bond" evidence="1">
    <location>
        <begin position="91"/>
        <end position="102"/>
    </location>
</feature>
<feature type="sequence conflict" description="In Ref. 2; AA sequence." evidence="5" ref="2">
    <original>R</original>
    <variation>Q</variation>
    <location>
        <position position="31"/>
    </location>
</feature>
<feature type="sequence conflict" description="In Ref. 2; AA sequence." evidence="5" ref="2">
    <original>R</original>
    <variation>K</variation>
    <location>
        <position position="51"/>
    </location>
</feature>
<feature type="sequence conflict" description="In Ref. 2; AA sequence." evidence="5" ref="2">
    <original>S</original>
    <variation>T</variation>
    <location>
        <position position="79"/>
    </location>
</feature>
<feature type="sequence conflict" description="In Ref. 2; AA sequence." evidence="5" ref="2">
    <original>V</original>
    <variation>I</variation>
    <location>
        <position position="89"/>
    </location>
</feature>
<comment type="function">
    <text evidence="2">Snake venom phospholipase A2 (PLA2) that triggers a high neuromuscular toxicity in chick biventer cervicis preparations, but not in mouse phrenic nerve-diaphragm (PND) preparations, suggesting a selective neurotoxin activity towards birds (PubMed:28063838). Does not induce myotoxic, coagulant, anticoagulant, edema, and antibacterial activities (PubMed:28063838). PLA2 catalyzes the calcium-dependent hydrolysis of the 2-acyl groups in 3-sn-phosphoglycerides (PubMed:28063838).</text>
</comment>
<comment type="catalytic activity">
    <reaction evidence="2">
        <text>a 1,2-diacyl-sn-glycero-3-phosphocholine + H2O = a 1-acyl-sn-glycero-3-phosphocholine + a fatty acid + H(+)</text>
        <dbReference type="Rhea" id="RHEA:15801"/>
        <dbReference type="ChEBI" id="CHEBI:15377"/>
        <dbReference type="ChEBI" id="CHEBI:15378"/>
        <dbReference type="ChEBI" id="CHEBI:28868"/>
        <dbReference type="ChEBI" id="CHEBI:57643"/>
        <dbReference type="ChEBI" id="CHEBI:58168"/>
        <dbReference type="EC" id="3.1.1.4"/>
    </reaction>
</comment>
<comment type="cofactor">
    <cofactor evidence="2">
        <name>Ca(2+)</name>
        <dbReference type="ChEBI" id="CHEBI:29108"/>
    </cofactor>
    <text evidence="1">Binds 1 Ca(2+) ion.</text>
</comment>
<comment type="activity regulation">
    <text evidence="2">Inhibited by divalent cations different from calcium ions (cadmium, magnesium, manganese, zinc), since they act as competitive antagonists of this cofactor.</text>
</comment>
<comment type="biophysicochemical properties">
    <kinetics>
        <KM evidence="2">1.75 mM for 4-nitro-3-(octanoyloxy) benzoic acid (NOBA)</KM>
        <Vmax evidence="2">25.9 nM/min/mg enzyme</Vmax>
    </kinetics>
    <phDependence>
        <text evidence="2">Optimum pH is 8.0.</text>
    </phDependence>
    <temperatureDependence>
        <text evidence="2">Optimum temperature is 37 degrees Celsius.</text>
    </temperatureDependence>
</comment>
<comment type="subunit">
    <text evidence="2">Monomer.</text>
</comment>
<comment type="subcellular location">
    <subcellularLocation>
        <location evidence="2">Secreted</location>
    </subcellularLocation>
</comment>
<comment type="tissue specificity">
    <text evidence="5">Expressed by the venom gland.</text>
</comment>
<comment type="mass spectrometry"/>
<comment type="similarity">
    <text evidence="4">Belongs to the phospholipase A2 family. Group II subfamily. D49 sub-subfamily.</text>
</comment>
<sequence>MRTLWIMAVLLLGVEGDLMQFETLIMKIAKRSGMFWYSAYGCYCGWGGQGRPQDATDRCCFVHDCCYGKVTGCDPKLDSYTYSVENGDVVCGGNDPCKKEICECDRAAAICFRDNKVTYDNKYWRFPPQNCKEESEPC</sequence>
<keyword id="KW-0106">Calcium</keyword>
<keyword id="KW-0903">Direct protein sequencing</keyword>
<keyword id="KW-1015">Disulfide bond</keyword>
<keyword id="KW-1199">Hemostasis impairing toxin</keyword>
<keyword id="KW-0378">Hydrolase</keyword>
<keyword id="KW-0442">Lipid degradation</keyword>
<keyword id="KW-0443">Lipid metabolism</keyword>
<keyword id="KW-0479">Metal-binding</keyword>
<keyword id="KW-0528">Neurotoxin</keyword>
<keyword id="KW-1201">Platelet aggregation inhibiting toxin</keyword>
<keyword id="KW-0638">Presynaptic neurotoxin</keyword>
<keyword id="KW-0964">Secreted</keyword>
<keyword id="KW-0732">Signal</keyword>
<keyword id="KW-0800">Toxin</keyword>
<name>PA21_AGKPL</name>
<accession>A0A411EZW9</accession>
<reference key="1">
    <citation type="journal article" date="2019" name="Toxins">
        <title>Rapid identification of phospholipase A(2) transcripts from snake venoms.</title>
        <authorList>
            <person name="Jia Y."/>
            <person name="Olvera P."/>
            <person name="Rangel F."/>
            <person name="Mendez B."/>
            <person name="Reddy S."/>
        </authorList>
    </citation>
    <scope>NUCLEOTIDE SEQUENCE [MRNA]</scope>
</reference>
<reference key="2">
    <citation type="journal article" date="2017" name="Toxicon">
        <title>Exploring and understanding the functional role, and biochemical and structural characteristics of an acidic phospholipase A2, AplTx-I, purified from Agkistrodon piscivorus leucostoma snake venom.</title>
        <authorList>
            <person name="Resende L.M."/>
            <person name="Almeida J.R."/>
            <person name="Schezaro-Ramos R."/>
            <person name="Collaco R.C."/>
            <person name="Simioni L.R."/>
            <person name="Ramirez D."/>
            <person name="Gonzalez W."/>
            <person name="Soares A.M."/>
            <person name="Calderon L.A."/>
            <person name="Marangoni S."/>
            <person name="da Silva S.L."/>
        </authorList>
    </citation>
    <scope>PROTEIN SEQUENCE OF 17-98 AND 100-138</scope>
    <scope>FUNCTION</scope>
    <scope>CATALYTIC ACTIVITY</scope>
    <scope>BIOPHYSICOCHEMICAL PROPERTIES</scope>
    <scope>COFACTOR</scope>
    <scope>MASS SPECTROMETRY</scope>
    <scope>SUBUNIT</scope>
    <scope>SUBCELLULAR LOCATION</scope>
    <scope>3D-STRUCTURE MODELING</scope>
    <source>
        <tissue>Venom</tissue>
    </source>
</reference>
<reference key="3">
    <citation type="journal article" date="2017" name="Toxicon">
        <authorList>
            <person name="Resende L.M."/>
            <person name="Almeida J.R."/>
            <person name="Ramos R.S."/>
            <person name="Collaco R.C."/>
            <person name="Simioni L.R."/>
            <person name="Ramirez D."/>
            <person name="Gonzalez W."/>
            <person name="Soares A.M."/>
            <person name="Calderon L.A."/>
            <person name="Marangoni S."/>
            <person name="da Silva S.L."/>
        </authorList>
    </citation>
    <scope>ERRATUM OF PUBMED:28063838</scope>
</reference>
<organism>
    <name type="scientific">Agkistrodon piscivorus leucostoma</name>
    <name type="common">Western cottonmouth</name>
    <name type="synonym">Acontias leucostoma</name>
    <dbReference type="NCBI Taxonomy" id="459671"/>
    <lineage>
        <taxon>Eukaryota</taxon>
        <taxon>Metazoa</taxon>
        <taxon>Chordata</taxon>
        <taxon>Craniata</taxon>
        <taxon>Vertebrata</taxon>
        <taxon>Euteleostomi</taxon>
        <taxon>Lepidosauria</taxon>
        <taxon>Squamata</taxon>
        <taxon>Bifurcata</taxon>
        <taxon>Unidentata</taxon>
        <taxon>Episquamata</taxon>
        <taxon>Toxicofera</taxon>
        <taxon>Serpentes</taxon>
        <taxon>Colubroidea</taxon>
        <taxon>Viperidae</taxon>
        <taxon>Crotalinae</taxon>
        <taxon>Agkistrodon</taxon>
    </lineage>
</organism>
<evidence type="ECO:0000250" key="1">
    <source>
        <dbReference type="UniProtKB" id="P14418"/>
    </source>
</evidence>
<evidence type="ECO:0000269" key="2">
    <source>
    </source>
</evidence>
<evidence type="ECO:0000303" key="3">
    <source>
    </source>
</evidence>
<evidence type="ECO:0000305" key="4"/>
<evidence type="ECO:0000305" key="5">
    <source>
    </source>
</evidence>
<proteinExistence type="evidence at protein level"/>
<protein>
    <recommendedName>
        <fullName evidence="3">Acidic phospholipase A2 AplTX-I</fullName>
        <shortName>svPLA2</shortName>
        <ecNumber evidence="2">3.1.1.4</ecNumber>
    </recommendedName>
    <alternativeName>
        <fullName>Phosphatidylcholine 2-acylhydrolase</fullName>
    </alternativeName>
</protein>
<dbReference type="EC" id="3.1.1.4" evidence="2"/>
<dbReference type="EMBL" id="MK393887">
    <property type="protein sequence ID" value="QBA85139.1"/>
    <property type="molecule type" value="mRNA"/>
</dbReference>
<dbReference type="SMR" id="A0A411EZW9"/>
<dbReference type="GO" id="GO:0005576">
    <property type="term" value="C:extracellular region"/>
    <property type="evidence" value="ECO:0007669"/>
    <property type="project" value="UniProtKB-SubCell"/>
</dbReference>
<dbReference type="GO" id="GO:0005509">
    <property type="term" value="F:calcium ion binding"/>
    <property type="evidence" value="ECO:0007669"/>
    <property type="project" value="InterPro"/>
</dbReference>
<dbReference type="GO" id="GO:0047498">
    <property type="term" value="F:calcium-dependent phospholipase A2 activity"/>
    <property type="evidence" value="ECO:0007669"/>
    <property type="project" value="TreeGrafter"/>
</dbReference>
<dbReference type="GO" id="GO:0005543">
    <property type="term" value="F:phospholipid binding"/>
    <property type="evidence" value="ECO:0007669"/>
    <property type="project" value="TreeGrafter"/>
</dbReference>
<dbReference type="GO" id="GO:0090729">
    <property type="term" value="F:toxin activity"/>
    <property type="evidence" value="ECO:0007669"/>
    <property type="project" value="UniProtKB-KW"/>
</dbReference>
<dbReference type="GO" id="GO:0050482">
    <property type="term" value="P:arachidonate secretion"/>
    <property type="evidence" value="ECO:0007669"/>
    <property type="project" value="InterPro"/>
</dbReference>
<dbReference type="GO" id="GO:0016042">
    <property type="term" value="P:lipid catabolic process"/>
    <property type="evidence" value="ECO:0007669"/>
    <property type="project" value="UniProtKB-KW"/>
</dbReference>
<dbReference type="GO" id="GO:0042130">
    <property type="term" value="P:negative regulation of T cell proliferation"/>
    <property type="evidence" value="ECO:0007669"/>
    <property type="project" value="TreeGrafter"/>
</dbReference>
<dbReference type="GO" id="GO:0006644">
    <property type="term" value="P:phospholipid metabolic process"/>
    <property type="evidence" value="ECO:0007669"/>
    <property type="project" value="InterPro"/>
</dbReference>
<dbReference type="CDD" id="cd00125">
    <property type="entry name" value="PLA2c"/>
    <property type="match status" value="1"/>
</dbReference>
<dbReference type="FunFam" id="1.20.90.10:FF:000001">
    <property type="entry name" value="Basic phospholipase A2 homolog"/>
    <property type="match status" value="1"/>
</dbReference>
<dbReference type="Gene3D" id="1.20.90.10">
    <property type="entry name" value="Phospholipase A2 domain"/>
    <property type="match status" value="1"/>
</dbReference>
<dbReference type="InterPro" id="IPR001211">
    <property type="entry name" value="PLipase_A2"/>
</dbReference>
<dbReference type="InterPro" id="IPR033112">
    <property type="entry name" value="PLipase_A2_Asp_AS"/>
</dbReference>
<dbReference type="InterPro" id="IPR016090">
    <property type="entry name" value="PLipase_A2_dom"/>
</dbReference>
<dbReference type="InterPro" id="IPR036444">
    <property type="entry name" value="PLipase_A2_dom_sf"/>
</dbReference>
<dbReference type="InterPro" id="IPR033113">
    <property type="entry name" value="PLipase_A2_His_AS"/>
</dbReference>
<dbReference type="PANTHER" id="PTHR11716">
    <property type="entry name" value="PHOSPHOLIPASE A2 FAMILY MEMBER"/>
    <property type="match status" value="1"/>
</dbReference>
<dbReference type="PANTHER" id="PTHR11716:SF9">
    <property type="entry name" value="PHOSPHOLIPASE A2, MEMBRANE ASSOCIATED"/>
    <property type="match status" value="1"/>
</dbReference>
<dbReference type="Pfam" id="PF00068">
    <property type="entry name" value="Phospholip_A2_1"/>
    <property type="match status" value="1"/>
</dbReference>
<dbReference type="PRINTS" id="PR00389">
    <property type="entry name" value="PHPHLIPASEA2"/>
</dbReference>
<dbReference type="SMART" id="SM00085">
    <property type="entry name" value="PA2c"/>
    <property type="match status" value="1"/>
</dbReference>
<dbReference type="SUPFAM" id="SSF48619">
    <property type="entry name" value="Phospholipase A2, PLA2"/>
    <property type="match status" value="1"/>
</dbReference>
<dbReference type="PROSITE" id="PS00119">
    <property type="entry name" value="PA2_ASP"/>
    <property type="match status" value="1"/>
</dbReference>
<dbReference type="PROSITE" id="PS00118">
    <property type="entry name" value="PA2_HIS"/>
    <property type="match status" value="1"/>
</dbReference>